<feature type="chain" id="PRO_0000353789" description="Cytochrome c biogenesis protein CcsA">
    <location>
        <begin position="1"/>
        <end position="316"/>
    </location>
</feature>
<feature type="transmembrane region" description="Helical" evidence="1">
    <location>
        <begin position="12"/>
        <end position="32"/>
    </location>
</feature>
<feature type="transmembrane region" description="Helical" evidence="1">
    <location>
        <begin position="44"/>
        <end position="64"/>
    </location>
</feature>
<feature type="transmembrane region" description="Helical" evidence="1">
    <location>
        <begin position="71"/>
        <end position="91"/>
    </location>
</feature>
<feature type="transmembrane region" description="Helical" evidence="1">
    <location>
        <begin position="98"/>
        <end position="118"/>
    </location>
</feature>
<feature type="transmembrane region" description="Helical" evidence="1">
    <location>
        <begin position="145"/>
        <end position="165"/>
    </location>
</feature>
<feature type="transmembrane region" description="Helical" evidence="1">
    <location>
        <begin position="222"/>
        <end position="242"/>
    </location>
</feature>
<feature type="transmembrane region" description="Helical" evidence="1">
    <location>
        <begin position="256"/>
        <end position="270"/>
    </location>
</feature>
<feature type="transmembrane region" description="Helical" evidence="1">
    <location>
        <begin position="283"/>
        <end position="303"/>
    </location>
</feature>
<keyword id="KW-0150">Chloroplast</keyword>
<keyword id="KW-0201">Cytochrome c-type biogenesis</keyword>
<keyword id="KW-0472">Membrane</keyword>
<keyword id="KW-0934">Plastid</keyword>
<keyword id="KW-0793">Thylakoid</keyword>
<keyword id="KW-0812">Transmembrane</keyword>
<keyword id="KW-1133">Transmembrane helix</keyword>
<reference key="1">
    <citation type="journal article" date="2005" name="Mol. Biol. Evol.">
        <title>Identifying the basal angiosperm node in chloroplast genome phylogenies: sampling one's way out of the Felsenstein zone.</title>
        <authorList>
            <person name="Leebens-Mack J."/>
            <person name="Raubeson L.A."/>
            <person name="Cui L."/>
            <person name="Kuehl J.V."/>
            <person name="Fourcade M.H."/>
            <person name="Chumley T.W."/>
            <person name="Boore J.L."/>
            <person name="Jansen R.K."/>
            <person name="dePamphilis C.W."/>
        </authorList>
    </citation>
    <scope>NUCLEOTIDE SEQUENCE [GENOMIC DNA]</scope>
</reference>
<reference key="2">
    <citation type="journal article" date="2007" name="BMC Genomics">
        <title>Comparative chloroplast genomics: analyses including new sequences from the angiosperms Nuphar advena and Ranunculus macranthus.</title>
        <authorList>
            <person name="Raubeson L.A."/>
            <person name="Peery R."/>
            <person name="Chumley T.W."/>
            <person name="Dziubek C."/>
            <person name="Fourcade H.M."/>
            <person name="Boore J.L."/>
            <person name="Jansen R.K."/>
        </authorList>
    </citation>
    <scope>NUCLEOTIDE SEQUENCE [LARGE SCALE GENOMIC DNA]</scope>
</reference>
<evidence type="ECO:0000255" key="1">
    <source>
        <dbReference type="HAMAP-Rule" id="MF_01391"/>
    </source>
</evidence>
<dbReference type="EMBL" id="DQ069370">
    <property type="protein sequence ID" value="AAZ03814.1"/>
    <property type="molecule type" value="Genomic_DNA"/>
</dbReference>
<dbReference type="EMBL" id="DQ359689">
    <property type="protein sequence ID" value="ABC70810.1"/>
    <property type="molecule type" value="Genomic_DNA"/>
</dbReference>
<dbReference type="RefSeq" id="YP_001004240.1">
    <property type="nucleotide sequence ID" value="NC_008796.1"/>
</dbReference>
<dbReference type="SMR" id="Q4FGG1"/>
<dbReference type="GeneID" id="4712098"/>
<dbReference type="GO" id="GO:0009535">
    <property type="term" value="C:chloroplast thylakoid membrane"/>
    <property type="evidence" value="ECO:0007669"/>
    <property type="project" value="UniProtKB-SubCell"/>
</dbReference>
<dbReference type="GO" id="GO:0005886">
    <property type="term" value="C:plasma membrane"/>
    <property type="evidence" value="ECO:0007669"/>
    <property type="project" value="TreeGrafter"/>
</dbReference>
<dbReference type="GO" id="GO:0020037">
    <property type="term" value="F:heme binding"/>
    <property type="evidence" value="ECO:0007669"/>
    <property type="project" value="InterPro"/>
</dbReference>
<dbReference type="GO" id="GO:0017004">
    <property type="term" value="P:cytochrome complex assembly"/>
    <property type="evidence" value="ECO:0007669"/>
    <property type="project" value="UniProtKB-UniRule"/>
</dbReference>
<dbReference type="HAMAP" id="MF_01391">
    <property type="entry name" value="CytC_CcsA"/>
    <property type="match status" value="1"/>
</dbReference>
<dbReference type="InterPro" id="IPR002541">
    <property type="entry name" value="Cyt_c_assembly"/>
</dbReference>
<dbReference type="InterPro" id="IPR017562">
    <property type="entry name" value="Cyt_c_biogenesis_CcsA"/>
</dbReference>
<dbReference type="InterPro" id="IPR045062">
    <property type="entry name" value="Cyt_c_biogenesis_CcsA/CcmC"/>
</dbReference>
<dbReference type="NCBIfam" id="TIGR03144">
    <property type="entry name" value="cytochr_II_ccsB"/>
    <property type="match status" value="1"/>
</dbReference>
<dbReference type="PANTHER" id="PTHR30071:SF1">
    <property type="entry name" value="CYTOCHROME B_B6 PROTEIN-RELATED"/>
    <property type="match status" value="1"/>
</dbReference>
<dbReference type="PANTHER" id="PTHR30071">
    <property type="entry name" value="HEME EXPORTER PROTEIN C"/>
    <property type="match status" value="1"/>
</dbReference>
<dbReference type="Pfam" id="PF01578">
    <property type="entry name" value="Cytochrom_C_asm"/>
    <property type="match status" value="1"/>
</dbReference>
<accession>Q4FGG1</accession>
<protein>
    <recommendedName>
        <fullName evidence="1">Cytochrome c biogenesis protein CcsA</fullName>
    </recommendedName>
</protein>
<organism>
    <name type="scientific">Ranunculus macranthus</name>
    <name type="common">Large buttercup</name>
    <dbReference type="NCBI Taxonomy" id="334596"/>
    <lineage>
        <taxon>Eukaryota</taxon>
        <taxon>Viridiplantae</taxon>
        <taxon>Streptophyta</taxon>
        <taxon>Embryophyta</taxon>
        <taxon>Tracheophyta</taxon>
        <taxon>Spermatophyta</taxon>
        <taxon>Magnoliopsida</taxon>
        <taxon>Ranunculales</taxon>
        <taxon>Ranunculaceae</taxon>
        <taxon>Ranunculoideae</taxon>
        <taxon>Ranunculeae</taxon>
        <taxon>Ranunculus</taxon>
    </lineage>
</organism>
<name>CCSA_RANMC</name>
<sequence>MIFFTLEHVLTHISLSIILIVITIFLMNLLVYEIEGLSYSSEKGMVASFLCITGLLVIRWIYSGHLPLSDLYESLMFLSWSFSIFYMIPYFRNKKSNLNVLTAPGTIFTQGFATSGVLREIHQSTILVPALQSQWLMMHVSMMVLSYAALLCGSLLSVALLVILFRKSSFTFSKYKGYYLPIGPLYFSEIQYVNEKKNIFLSFRNYHRYQLIQQLDCWSSRVISLGFLFLTIGILSGAVWANETWGSYWNWDPKETWAFITWTIFAIYLHTRTNKSLQSSNSAIVASIGFFIIWICYFGVNLLGIGLHSYGSFAIT</sequence>
<gene>
    <name evidence="1" type="primary">ccsA</name>
</gene>
<proteinExistence type="inferred from homology"/>
<geneLocation type="chloroplast"/>
<comment type="function">
    <text evidence="1">Required during biogenesis of c-type cytochromes (cytochrome c6 and cytochrome f) at the step of heme attachment.</text>
</comment>
<comment type="subunit">
    <text evidence="1">May interact with Ccs1.</text>
</comment>
<comment type="subcellular location">
    <subcellularLocation>
        <location evidence="1">Plastid</location>
        <location evidence="1">Chloroplast thylakoid membrane</location>
        <topology evidence="1">Multi-pass membrane protein</topology>
    </subcellularLocation>
</comment>
<comment type="similarity">
    <text evidence="1">Belongs to the CcmF/CycK/Ccl1/NrfE/CcsA family.</text>
</comment>